<accession>Q7ZXQ3</accession>
<proteinExistence type="evidence at transcript level"/>
<gene>
    <name type="primary">herpud2</name>
</gene>
<name>HERP2_XENLA</name>
<protein>
    <recommendedName>
        <fullName>Homocysteine-responsive endoplasmic reticulum-resident ubiquitin-like domain member 2 protein</fullName>
    </recommendedName>
</protein>
<feature type="chain" id="PRO_0000280631" description="Homocysteine-responsive endoplasmic reticulum-resident ubiquitin-like domain member 2 protein">
    <location>
        <begin position="1"/>
        <end position="398"/>
    </location>
</feature>
<feature type="transmembrane region" description="Helical" evidence="2">
    <location>
        <begin position="298"/>
        <end position="318"/>
    </location>
</feature>
<feature type="domain" description="Ubiquitin-like" evidence="3">
    <location>
        <begin position="11"/>
        <end position="90"/>
    </location>
</feature>
<feature type="region of interest" description="Disordered" evidence="4">
    <location>
        <begin position="90"/>
        <end position="143"/>
    </location>
</feature>
<feature type="region of interest" description="Disordered" evidence="4">
    <location>
        <begin position="212"/>
        <end position="247"/>
    </location>
</feature>
<feature type="compositionally biased region" description="Low complexity" evidence="4">
    <location>
        <begin position="96"/>
        <end position="125"/>
    </location>
</feature>
<feature type="compositionally biased region" description="Pro residues" evidence="4">
    <location>
        <begin position="233"/>
        <end position="245"/>
    </location>
</feature>
<keyword id="KW-0472">Membrane</keyword>
<keyword id="KW-1185">Reference proteome</keyword>
<keyword id="KW-0812">Transmembrane</keyword>
<keyword id="KW-1133">Transmembrane helix</keyword>
<keyword id="KW-0834">Unfolded protein response</keyword>
<comment type="function">
    <text evidence="1">Could be involved in the unfolded protein response (UPR) pathway.</text>
</comment>
<comment type="subcellular location">
    <subcellularLocation>
        <location evidence="5">Membrane</location>
        <topology evidence="5">Single-pass membrane protein</topology>
    </subcellularLocation>
</comment>
<reference key="1">
    <citation type="submission" date="2003-01" db="EMBL/GenBank/DDBJ databases">
        <authorList>
            <consortium name="NIH - Xenopus Gene Collection (XGC) project"/>
        </authorList>
    </citation>
    <scope>NUCLEOTIDE SEQUENCE [LARGE SCALE MRNA]</scope>
    <source>
        <tissue>Embryo</tissue>
    </source>
</reference>
<dbReference type="EMBL" id="BC044318">
    <property type="protein sequence ID" value="AAH44318.1"/>
    <property type="molecule type" value="mRNA"/>
</dbReference>
<dbReference type="RefSeq" id="NP_001079560.1">
    <property type="nucleotide sequence ID" value="NM_001086091.1"/>
</dbReference>
<dbReference type="SMR" id="Q7ZXQ3"/>
<dbReference type="DNASU" id="379247"/>
<dbReference type="GeneID" id="379247"/>
<dbReference type="KEGG" id="xla:379247"/>
<dbReference type="AGR" id="Xenbase:XB-GENE-6256358"/>
<dbReference type="CTD" id="379247"/>
<dbReference type="Xenbase" id="XB-GENE-6256358">
    <property type="gene designation" value="herpud2.L"/>
</dbReference>
<dbReference type="OMA" id="YMQLMAA"/>
<dbReference type="OrthoDB" id="21589at2759"/>
<dbReference type="Proteomes" id="UP000186698">
    <property type="component" value="Chromosome 6L"/>
</dbReference>
<dbReference type="Bgee" id="379247">
    <property type="expression patterns" value="Expressed in muscle tissue and 19 other cell types or tissues"/>
</dbReference>
<dbReference type="GO" id="GO:0016020">
    <property type="term" value="C:membrane"/>
    <property type="evidence" value="ECO:0007669"/>
    <property type="project" value="UniProtKB-SubCell"/>
</dbReference>
<dbReference type="GO" id="GO:0030968">
    <property type="term" value="P:endoplasmic reticulum unfolded protein response"/>
    <property type="evidence" value="ECO:0000318"/>
    <property type="project" value="GO_Central"/>
</dbReference>
<dbReference type="CDD" id="cd17119">
    <property type="entry name" value="Ubl_HERP2"/>
    <property type="match status" value="1"/>
</dbReference>
<dbReference type="FunFam" id="3.10.20.90:FF:000046">
    <property type="entry name" value="Homocysteine-responsive endoplasmic reticulum-resident ubiquitin-like domain member 2 protein"/>
    <property type="match status" value="1"/>
</dbReference>
<dbReference type="Gene3D" id="3.10.20.90">
    <property type="entry name" value="Phosphatidylinositol 3-kinase Catalytic Subunit, Chain A, domain 1"/>
    <property type="match status" value="1"/>
</dbReference>
<dbReference type="InterPro" id="IPR039751">
    <property type="entry name" value="HERPUD1/2"/>
</dbReference>
<dbReference type="InterPro" id="IPR000626">
    <property type="entry name" value="Ubiquitin-like_dom"/>
</dbReference>
<dbReference type="InterPro" id="IPR029071">
    <property type="entry name" value="Ubiquitin-like_domsf"/>
</dbReference>
<dbReference type="PANTHER" id="PTHR12943:SF5">
    <property type="entry name" value="HOMOCYSTEINE-RESPONSIVE ENDOPLASMIC RETICULUM-RESIDENT UBIQUITIN-LIKE DOMAIN MEMBER 2 PROTEIN"/>
    <property type="match status" value="1"/>
</dbReference>
<dbReference type="PANTHER" id="PTHR12943">
    <property type="entry name" value="HOMOCYSTEINE-RESPONSIVE ENDOPLASMIC RETICULUM-RESIDENT UNIQUITIN-LIKE DOMAIN HERPUD PROTEIN FAMILY MEMBER"/>
    <property type="match status" value="1"/>
</dbReference>
<dbReference type="Pfam" id="PF00240">
    <property type="entry name" value="ubiquitin"/>
    <property type="match status" value="1"/>
</dbReference>
<dbReference type="SMART" id="SM00213">
    <property type="entry name" value="UBQ"/>
    <property type="match status" value="1"/>
</dbReference>
<dbReference type="SUPFAM" id="SSF54236">
    <property type="entry name" value="Ubiquitin-like"/>
    <property type="match status" value="1"/>
</dbReference>
<dbReference type="PROSITE" id="PS50053">
    <property type="entry name" value="UBIQUITIN_2"/>
    <property type="match status" value="1"/>
</dbReference>
<organism>
    <name type="scientific">Xenopus laevis</name>
    <name type="common">African clawed frog</name>
    <dbReference type="NCBI Taxonomy" id="8355"/>
    <lineage>
        <taxon>Eukaryota</taxon>
        <taxon>Metazoa</taxon>
        <taxon>Chordata</taxon>
        <taxon>Craniata</taxon>
        <taxon>Vertebrata</taxon>
        <taxon>Euteleostomi</taxon>
        <taxon>Amphibia</taxon>
        <taxon>Batrachia</taxon>
        <taxon>Anura</taxon>
        <taxon>Pipoidea</taxon>
        <taxon>Pipidae</taxon>
        <taxon>Xenopodinae</taxon>
        <taxon>Xenopus</taxon>
        <taxon>Xenopus</taxon>
    </lineage>
</organism>
<evidence type="ECO:0000250" key="1"/>
<evidence type="ECO:0000255" key="2"/>
<evidence type="ECO:0000255" key="3">
    <source>
        <dbReference type="PROSITE-ProRule" id="PRU00214"/>
    </source>
</evidence>
<evidence type="ECO:0000256" key="4">
    <source>
        <dbReference type="SAM" id="MobiDB-lite"/>
    </source>
</evidence>
<evidence type="ECO:0000305" key="5"/>
<sequence length="398" mass="44393">MTCQPVMDCPVTLVIKAPNQKYDDQTINCFLDWTVEKLKSHLSKVYPSKPSAKDQRLVYSGKLLLDHLLLKDVLRKQDEYHMVHLVCASRTPPSSPKASKSSKSMGTSSSGRSSSSGSANPGSTSQDTSSTYPDPRPGESIRHRHTPLMYNNLVHSHPYSYLRQEYALNPPPGQEAPSIFPAYSAFTPLQMMWWQQLYARQYYIYSQATASNQSTSNGENAQPVPRPVTNSENPPPNPPRAPPNVAPEINPNIQMNAQGGPVMNEEDINRDWLDWIYTVSRAAILLSIVYFYSSFSRFVMVMGALILVYMHQAGWFPLLQDEGQQHPGDNAAEVNPDLVNNNDPQELERRMDDGLQEVHNNDAGVNVVARQGVLASAWSFITTFFTSLIPEGPPQGVN</sequence>